<organism>
    <name type="scientific">Propithecus coquereli</name>
    <name type="common">Coquerel's sifaka</name>
    <name type="synonym">Propithecus verreauxi coquereli</name>
    <dbReference type="NCBI Taxonomy" id="379532"/>
    <lineage>
        <taxon>Eukaryota</taxon>
        <taxon>Metazoa</taxon>
        <taxon>Chordata</taxon>
        <taxon>Craniata</taxon>
        <taxon>Vertebrata</taxon>
        <taxon>Euteleostomi</taxon>
        <taxon>Mammalia</taxon>
        <taxon>Eutheria</taxon>
        <taxon>Euarchontoglires</taxon>
        <taxon>Primates</taxon>
        <taxon>Strepsirrhini</taxon>
        <taxon>Lemuriformes</taxon>
        <taxon>Indriidae</taxon>
        <taxon>Propithecus</taxon>
    </lineage>
</organism>
<evidence type="ECO:0000250" key="1">
    <source>
        <dbReference type="UniProtKB" id="A1Y9I9"/>
    </source>
</evidence>
<evidence type="ECO:0000250" key="2">
    <source>
        <dbReference type="UniProtKB" id="Q8WZ04"/>
    </source>
</evidence>
<evidence type="ECO:0000255" key="3"/>
<evidence type="ECO:0000255" key="4">
    <source>
        <dbReference type="PROSITE-ProRule" id="PRU01019"/>
    </source>
</evidence>
<evidence type="ECO:0000269" key="5">
    <source>
    </source>
</evidence>
<evidence type="ECO:0000303" key="6">
    <source>
    </source>
</evidence>
<evidence type="ECO:0000305" key="7"/>
<evidence type="ECO:0000312" key="8">
    <source>
        <dbReference type="EMBL" id="ACF40897.1"/>
    </source>
</evidence>
<accession>B6CZ56</accession>
<accession>B6CZ57</accession>
<protein>
    <recommendedName>
        <fullName evidence="1">Transmembrane O-methyltransferase</fullName>
        <ecNumber evidence="1">2.1.1.6</ecNumber>
    </recommendedName>
    <alternativeName>
        <fullName evidence="2">Catechol O-methyltransferase 2</fullName>
    </alternativeName>
    <alternativeName>
        <fullName evidence="6">Protein LRTOMT2</fullName>
    </alternativeName>
</protein>
<proteinExistence type="evidence at transcript level"/>
<reference evidence="7 8" key="1">
    <citation type="journal article" date="2008" name="Nat. Genet.">
        <title>Mutations of LRTOMT, a fusion gene with alternative reading frames, cause nonsyndromic deafness in humans.</title>
        <authorList>
            <person name="Ahmed Z.M."/>
            <person name="Masmoudi S."/>
            <person name="Kalay E."/>
            <person name="Belyantseva I.A."/>
            <person name="Mosrati M.A."/>
            <person name="Collin R.W.J."/>
            <person name="Riazuddin S."/>
            <person name="Hmani-Aifa M."/>
            <person name="Venselaar H."/>
            <person name="Kawar M.N."/>
            <person name="Tlili A."/>
            <person name="van der Zwaag B."/>
            <person name="Khan S.Y."/>
            <person name="Ayadi L."/>
            <person name="Riazuddin S.A."/>
            <person name="Morell R.J."/>
            <person name="Griffith A.J."/>
            <person name="Charfedine I."/>
            <person name="Caylan R."/>
            <person name="Oostrik J."/>
            <person name="Karaguzel A."/>
            <person name="Ghorbel A."/>
            <person name="Riazuddin S."/>
            <person name="Friedman T.B."/>
            <person name="Ayadi H."/>
            <person name="Kremer H."/>
        </authorList>
    </citation>
    <scope>NUCLEOTIDE SEQUENCE [MRNA] (ISOFORMS 1 AND 2)</scope>
    <source>
        <tissue evidence="8">Brain</tissue>
    </source>
</reference>
<dbReference type="EC" id="2.1.1.6" evidence="1"/>
<dbReference type="EMBL" id="EU627087">
    <property type="protein sequence ID" value="ACF40897.1"/>
    <property type="status" value="ALT_FRAME"/>
    <property type="molecule type" value="mRNA"/>
</dbReference>
<dbReference type="EMBL" id="EU627088">
    <property type="protein sequence ID" value="ACF40898.1"/>
    <property type="molecule type" value="mRNA"/>
</dbReference>
<dbReference type="SMR" id="B6CZ56"/>
<dbReference type="STRING" id="379532.ENSPCOP00000018810"/>
<dbReference type="Proteomes" id="UP000233160">
    <property type="component" value="Unassembled WGS sequence"/>
</dbReference>
<dbReference type="GO" id="GO:0045177">
    <property type="term" value="C:apical part of cell"/>
    <property type="evidence" value="ECO:0000250"/>
    <property type="project" value="UniProtKB"/>
</dbReference>
<dbReference type="GO" id="GO:0005737">
    <property type="term" value="C:cytoplasm"/>
    <property type="evidence" value="ECO:0000250"/>
    <property type="project" value="UniProtKB"/>
</dbReference>
<dbReference type="GO" id="GO:0005783">
    <property type="term" value="C:endoplasmic reticulum"/>
    <property type="evidence" value="ECO:0000250"/>
    <property type="project" value="UniProtKB"/>
</dbReference>
<dbReference type="GO" id="GO:0016020">
    <property type="term" value="C:membrane"/>
    <property type="evidence" value="ECO:0007669"/>
    <property type="project" value="UniProtKB-SubCell"/>
</dbReference>
<dbReference type="GO" id="GO:0016206">
    <property type="term" value="F:catechol O-methyltransferase activity"/>
    <property type="evidence" value="ECO:0000250"/>
    <property type="project" value="UniProtKB"/>
</dbReference>
<dbReference type="GO" id="GO:0042424">
    <property type="term" value="P:catecholamine catabolic process"/>
    <property type="evidence" value="ECO:0000250"/>
    <property type="project" value="UniProtKB"/>
</dbReference>
<dbReference type="GO" id="GO:0032502">
    <property type="term" value="P:developmental process"/>
    <property type="evidence" value="ECO:0007669"/>
    <property type="project" value="TreeGrafter"/>
</dbReference>
<dbReference type="GO" id="GO:0042417">
    <property type="term" value="P:dopamine metabolic process"/>
    <property type="evidence" value="ECO:0007669"/>
    <property type="project" value="TreeGrafter"/>
</dbReference>
<dbReference type="GO" id="GO:0032259">
    <property type="term" value="P:methylation"/>
    <property type="evidence" value="ECO:0007669"/>
    <property type="project" value="UniProtKB-KW"/>
</dbReference>
<dbReference type="GO" id="GO:0007605">
    <property type="term" value="P:sensory perception of sound"/>
    <property type="evidence" value="ECO:0007669"/>
    <property type="project" value="UniProtKB-KW"/>
</dbReference>
<dbReference type="CDD" id="cd02440">
    <property type="entry name" value="AdoMet_MTases"/>
    <property type="match status" value="1"/>
</dbReference>
<dbReference type="FunFam" id="3.40.50.150:FF:000054">
    <property type="entry name" value="Catechol O-methyltransferase"/>
    <property type="match status" value="1"/>
</dbReference>
<dbReference type="Gene3D" id="3.40.50.150">
    <property type="entry name" value="Vaccinia Virus protein VP39"/>
    <property type="match status" value="1"/>
</dbReference>
<dbReference type="InterPro" id="IPR029063">
    <property type="entry name" value="SAM-dependent_MTases_sf"/>
</dbReference>
<dbReference type="InterPro" id="IPR002935">
    <property type="entry name" value="SAM_O-MeTrfase"/>
</dbReference>
<dbReference type="PANTHER" id="PTHR43836">
    <property type="entry name" value="CATECHOL O-METHYLTRANSFERASE 1-RELATED"/>
    <property type="match status" value="1"/>
</dbReference>
<dbReference type="PANTHER" id="PTHR43836:SF1">
    <property type="entry name" value="TRANSMEMBRANE O-METHYLTRANSFERASE"/>
    <property type="match status" value="1"/>
</dbReference>
<dbReference type="Pfam" id="PF01596">
    <property type="entry name" value="Methyltransf_3"/>
    <property type="match status" value="1"/>
</dbReference>
<dbReference type="SUPFAM" id="SSF53335">
    <property type="entry name" value="S-adenosyl-L-methionine-dependent methyltransferases"/>
    <property type="match status" value="1"/>
</dbReference>
<dbReference type="PROSITE" id="PS51682">
    <property type="entry name" value="SAM_OMT_I"/>
    <property type="match status" value="1"/>
</dbReference>
<comment type="function">
    <text evidence="1 2">Catalyzes the O-methylation, and thereby the inactivation, of catecholamine neurotransmitters and catechol hormones (By similarity). Required for auditory function (By similarity). Component of the cochlear hair cell's mechanotransduction (MET) machinery. Involved in the assembly of the asymmetric tip-link MET complex. Required for transportation of TMC1 and TMC2 proteins into the mechanically sensitive stereocilia of the hair cells. The function in MET is independent of the enzymatic activity (By similarity).</text>
</comment>
<comment type="catalytic activity">
    <reaction evidence="1">
        <text>a catechol + S-adenosyl-L-methionine = a guaiacol + S-adenosyl-L-homocysteine + H(+)</text>
        <dbReference type="Rhea" id="RHEA:17877"/>
        <dbReference type="ChEBI" id="CHEBI:15378"/>
        <dbReference type="ChEBI" id="CHEBI:33566"/>
        <dbReference type="ChEBI" id="CHEBI:57856"/>
        <dbReference type="ChEBI" id="CHEBI:59789"/>
        <dbReference type="ChEBI" id="CHEBI:134251"/>
        <dbReference type="EC" id="2.1.1.6"/>
    </reaction>
    <physiologicalReaction direction="left-to-right" evidence="1">
        <dbReference type="Rhea" id="RHEA:17878"/>
    </physiologicalReaction>
</comment>
<comment type="subunit">
    <text evidence="1">Interacts with LHFPL5, PCDH15, TMC1, TMC2 and TMIE. Interacts directly with TMC1. The interaction of TOMT with TMC1 and TMC2 is required for the transportation of TMC1/2 into the stereocilia of hair cells.</text>
</comment>
<comment type="subcellular location">
    <molecule>Isoform 1</molecule>
    <subcellularLocation>
        <location evidence="3">Membrane</location>
        <topology evidence="3">Single-pass membrane protein</topology>
    </subcellularLocation>
</comment>
<comment type="subcellular location">
    <molecule>Isoform 2</molecule>
    <subcellularLocation>
        <location evidence="1">Cytoplasm</location>
    </subcellularLocation>
    <subcellularLocation>
        <location evidence="1">Endoplasmic reticulum</location>
    </subcellularLocation>
    <text evidence="1">Localized to the cell body of the cochlear hair cells, but is not present in the stereocilia. Present but not restricted to the apical cistern, Hensen's body and the subsurface cistern.</text>
</comment>
<comment type="alternative products">
    <event type="alternative splicing"/>
    <isoform>
        <id>B6CZ56-1</id>
        <name evidence="5">1</name>
        <name evidence="5">C</name>
        <sequence type="displayed"/>
    </isoform>
    <isoform>
        <id>B6CZ56-2</id>
        <name evidence="5">2</name>
        <name evidence="5">D</name>
        <sequence type="described" ref="VSP_053069"/>
    </isoform>
</comment>
<comment type="miscellaneous">
    <text evidence="6">LRRC51 and TOMT were originally considered as alternative reading frames, LRTOMT1 and LRTOMT2 of the same LRTOMT gene in primates.</text>
</comment>
<comment type="similarity">
    <text evidence="4">Belongs to the class I-like SAM-binding methyltransferase superfamily. Cation-dependent O-methyltransferase family.</text>
</comment>
<comment type="sequence caution" evidence="7">
    <conflict type="frameshift">
        <sequence resource="EMBL-CDS" id="ACF40897"/>
    </conflict>
</comment>
<feature type="chain" id="PRO_0000372488" description="Transmembrane O-methyltransferase">
    <location>
        <begin position="1"/>
        <end position="274"/>
    </location>
</feature>
<feature type="transmembrane region" description="Helical" evidence="3">
    <location>
        <begin position="14"/>
        <end position="34"/>
    </location>
</feature>
<feature type="binding site" evidence="4">
    <location>
        <position position="120"/>
    </location>
    <ligand>
        <name>S-adenosyl-L-methionine</name>
        <dbReference type="ChEBI" id="CHEBI:59789"/>
    </ligand>
</feature>
<feature type="binding site" evidence="4">
    <location>
        <begin position="122"/>
        <end position="123"/>
    </location>
    <ligand>
        <name>S-adenosyl-L-methionine</name>
        <dbReference type="ChEBI" id="CHEBI:59789"/>
    </ligand>
</feature>
<feature type="binding site" evidence="4">
    <location>
        <position position="128"/>
    </location>
    <ligand>
        <name>S-adenosyl-L-methionine</name>
        <dbReference type="ChEBI" id="CHEBI:59789"/>
    </ligand>
</feature>
<feature type="binding site" evidence="4">
    <location>
        <position position="146"/>
    </location>
    <ligand>
        <name>S-adenosyl-L-methionine</name>
        <dbReference type="ChEBI" id="CHEBI:59789"/>
    </ligand>
</feature>
<feature type="binding site" evidence="4">
    <location>
        <position position="176"/>
    </location>
    <ligand>
        <name>S-adenosyl-L-methionine</name>
        <dbReference type="ChEBI" id="CHEBI:59789"/>
    </ligand>
</feature>
<feature type="splice variant" id="VSP_053069" description="In isoform 2." evidence="6">
    <location>
        <begin position="12"/>
        <end position="102"/>
    </location>
</feature>
<name>TOMT_PROCO</name>
<keyword id="KW-0025">Alternative splicing</keyword>
<keyword id="KW-0128">Catecholamine metabolism</keyword>
<keyword id="KW-0963">Cytoplasm</keyword>
<keyword id="KW-0209">Deafness</keyword>
<keyword id="KW-0256">Endoplasmic reticulum</keyword>
<keyword id="KW-1009">Hearing</keyword>
<keyword id="KW-0472">Membrane</keyword>
<keyword id="KW-0489">Methyltransferase</keyword>
<keyword id="KW-0531">Neurotransmitter degradation</keyword>
<keyword id="KW-1185">Reference proteome</keyword>
<keyword id="KW-0949">S-adenosyl-L-methionine</keyword>
<keyword id="KW-0808">Transferase</keyword>
<keyword id="KW-0812">Transmembrane</keyword>
<keyword id="KW-1133">Transmembrane helix</keyword>
<sequence>MGTPWRKRKGITQVGTMSPAIALAFLPLVVTLLVRYRHYFRLLVGTVLLRSLRDCLSGLRIEERAFSYVLTHALPGDPGHILTTLDHWSSHCEYLSHMGPVKGQILMRLVEEKAPACVLELGTYCGYSTLLIAQALPPGGRLLTVERDPRTAAVAEKLIRLAGFDEHMVELIVGSSEEVIPCLRTQYQLSRADLVLLIHRPRCYLRDLQLLEAHALLPAGATVLADHVLFPGAPRFLQYAKSCGRYRCRLYHTGLPDFPAIKDGIAQLTYAGPG</sequence>
<gene>
    <name evidence="2" type="primary">TOMT</name>
    <name evidence="2" type="synonym">COMT2</name>
    <name evidence="6" type="synonym">LRTOMT</name>
</gene>